<accession>A5FHV5</accession>
<feature type="chain" id="PRO_1000080351" description="Large ribosomal subunit protein bL19">
    <location>
        <begin position="1"/>
        <end position="116"/>
    </location>
</feature>
<dbReference type="EMBL" id="CP000685">
    <property type="protein sequence ID" value="ABQ05210.1"/>
    <property type="molecule type" value="Genomic_DNA"/>
</dbReference>
<dbReference type="RefSeq" id="WP_012024249.1">
    <property type="nucleotide sequence ID" value="NZ_MUGZ01000022.1"/>
</dbReference>
<dbReference type="SMR" id="A5FHV5"/>
<dbReference type="STRING" id="376686.Fjoh_2182"/>
<dbReference type="KEGG" id="fjo:Fjoh_2182"/>
<dbReference type="eggNOG" id="COG0335">
    <property type="taxonomic scope" value="Bacteria"/>
</dbReference>
<dbReference type="HOGENOM" id="CLU_103507_2_1_10"/>
<dbReference type="OrthoDB" id="9803541at2"/>
<dbReference type="Proteomes" id="UP000006694">
    <property type="component" value="Chromosome"/>
</dbReference>
<dbReference type="GO" id="GO:0022625">
    <property type="term" value="C:cytosolic large ribosomal subunit"/>
    <property type="evidence" value="ECO:0007669"/>
    <property type="project" value="TreeGrafter"/>
</dbReference>
<dbReference type="GO" id="GO:0003735">
    <property type="term" value="F:structural constituent of ribosome"/>
    <property type="evidence" value="ECO:0007669"/>
    <property type="project" value="InterPro"/>
</dbReference>
<dbReference type="GO" id="GO:0006412">
    <property type="term" value="P:translation"/>
    <property type="evidence" value="ECO:0007669"/>
    <property type="project" value="UniProtKB-UniRule"/>
</dbReference>
<dbReference type="Gene3D" id="2.30.30.790">
    <property type="match status" value="1"/>
</dbReference>
<dbReference type="HAMAP" id="MF_00402">
    <property type="entry name" value="Ribosomal_bL19"/>
    <property type="match status" value="1"/>
</dbReference>
<dbReference type="InterPro" id="IPR001857">
    <property type="entry name" value="Ribosomal_bL19"/>
</dbReference>
<dbReference type="InterPro" id="IPR038657">
    <property type="entry name" value="Ribosomal_bL19_sf"/>
</dbReference>
<dbReference type="InterPro" id="IPR008991">
    <property type="entry name" value="Translation_prot_SH3-like_sf"/>
</dbReference>
<dbReference type="NCBIfam" id="TIGR01024">
    <property type="entry name" value="rplS_bact"/>
    <property type="match status" value="1"/>
</dbReference>
<dbReference type="PANTHER" id="PTHR15680:SF9">
    <property type="entry name" value="LARGE RIBOSOMAL SUBUNIT PROTEIN BL19M"/>
    <property type="match status" value="1"/>
</dbReference>
<dbReference type="PANTHER" id="PTHR15680">
    <property type="entry name" value="RIBOSOMAL PROTEIN L19"/>
    <property type="match status" value="1"/>
</dbReference>
<dbReference type="Pfam" id="PF01245">
    <property type="entry name" value="Ribosomal_L19"/>
    <property type="match status" value="1"/>
</dbReference>
<dbReference type="PIRSF" id="PIRSF002191">
    <property type="entry name" value="Ribosomal_L19"/>
    <property type="match status" value="1"/>
</dbReference>
<dbReference type="PRINTS" id="PR00061">
    <property type="entry name" value="RIBOSOMALL19"/>
</dbReference>
<dbReference type="SUPFAM" id="SSF50104">
    <property type="entry name" value="Translation proteins SH3-like domain"/>
    <property type="match status" value="1"/>
</dbReference>
<proteinExistence type="inferred from homology"/>
<protein>
    <recommendedName>
        <fullName evidence="1">Large ribosomal subunit protein bL19</fullName>
    </recommendedName>
    <alternativeName>
        <fullName evidence="2">50S ribosomal protein L19</fullName>
    </alternativeName>
</protein>
<name>RL19_FLAJ1</name>
<organism>
    <name type="scientific">Flavobacterium johnsoniae (strain ATCC 17061 / DSM 2064 / JCM 8514 / BCRC 14874 / CCUG 350202 / NBRC 14942 / NCIMB 11054 / UW101)</name>
    <name type="common">Cytophaga johnsonae</name>
    <dbReference type="NCBI Taxonomy" id="376686"/>
    <lineage>
        <taxon>Bacteria</taxon>
        <taxon>Pseudomonadati</taxon>
        <taxon>Bacteroidota</taxon>
        <taxon>Flavobacteriia</taxon>
        <taxon>Flavobacteriales</taxon>
        <taxon>Flavobacteriaceae</taxon>
        <taxon>Flavobacterium</taxon>
    </lineage>
</organism>
<evidence type="ECO:0000255" key="1">
    <source>
        <dbReference type="HAMAP-Rule" id="MF_00402"/>
    </source>
</evidence>
<evidence type="ECO:0000305" key="2"/>
<gene>
    <name evidence="1" type="primary">rplS</name>
    <name type="ordered locus">Fjoh_2182</name>
</gene>
<keyword id="KW-0687">Ribonucleoprotein</keyword>
<keyword id="KW-0689">Ribosomal protein</keyword>
<sequence>MADLLKFVQNEFVAKKDFPDFGAGDTITVFYEIKEGEKTRTQFFKGVVIQRRGSGTTETFTIRKMSGAIGVERIFPVNLPALQKIEINKKGAVRRARIFYFRELTGKKAKIKDKRR</sequence>
<reference key="1">
    <citation type="journal article" date="2009" name="Appl. Environ. Microbiol.">
        <title>Novel features of the polysaccharide-digesting gliding bacterium Flavobacterium johnsoniae as revealed by genome sequence analysis.</title>
        <authorList>
            <person name="McBride M.J."/>
            <person name="Xie G."/>
            <person name="Martens E.C."/>
            <person name="Lapidus A."/>
            <person name="Henrissat B."/>
            <person name="Rhodes R.G."/>
            <person name="Goltsman E."/>
            <person name="Wang W."/>
            <person name="Xu J."/>
            <person name="Hunnicutt D.W."/>
            <person name="Staroscik A.M."/>
            <person name="Hoover T.R."/>
            <person name="Cheng Y.Q."/>
            <person name="Stein J.L."/>
        </authorList>
    </citation>
    <scope>NUCLEOTIDE SEQUENCE [LARGE SCALE GENOMIC DNA]</scope>
    <source>
        <strain>ATCC 17061 / DSM 2064 / JCM 8514 / BCRC 14874 / CCUG 350202 / NBRC 14942 / NCIMB 11054 / UW101</strain>
    </source>
</reference>
<comment type="function">
    <text evidence="1">This protein is located at the 30S-50S ribosomal subunit interface and may play a role in the structure and function of the aminoacyl-tRNA binding site.</text>
</comment>
<comment type="similarity">
    <text evidence="1">Belongs to the bacterial ribosomal protein bL19 family.</text>
</comment>